<protein>
    <recommendedName>
        <fullName evidence="8">Endosome/lysosome-associated apoptosis and autophagy regulator family member 2</fullName>
    </recommendedName>
</protein>
<organism>
    <name type="scientific">Bos taurus</name>
    <name type="common">Bovine</name>
    <dbReference type="NCBI Taxonomy" id="9913"/>
    <lineage>
        <taxon>Eukaryota</taxon>
        <taxon>Metazoa</taxon>
        <taxon>Chordata</taxon>
        <taxon>Craniata</taxon>
        <taxon>Vertebrata</taxon>
        <taxon>Euteleostomi</taxon>
        <taxon>Mammalia</taxon>
        <taxon>Eutheria</taxon>
        <taxon>Laurasiatheria</taxon>
        <taxon>Artiodactyla</taxon>
        <taxon>Ruminantia</taxon>
        <taxon>Pecora</taxon>
        <taxon>Bovidae</taxon>
        <taxon>Bovinae</taxon>
        <taxon>Bos</taxon>
    </lineage>
</organism>
<accession>A7E2Z9</accession>
<reference key="1">
    <citation type="submission" date="2007-08" db="EMBL/GenBank/DDBJ databases">
        <authorList>
            <consortium name="NIH - Mammalian Gene Collection (MGC) project"/>
        </authorList>
    </citation>
    <scope>NUCLEOTIDE SEQUENCE [LARGE SCALE MRNA]</scope>
    <source>
        <strain>Hereford</strain>
        <tissue>Hypothalamus</tissue>
    </source>
</reference>
<name>ELAP2_BOVIN</name>
<gene>
    <name evidence="2" type="primary">ELAPOR2</name>
</gene>
<evidence type="ECO:0000250" key="1"/>
<evidence type="ECO:0000250" key="2">
    <source>
        <dbReference type="UniProtKB" id="A8MWY0"/>
    </source>
</evidence>
<evidence type="ECO:0000250" key="3">
    <source>
        <dbReference type="UniProtKB" id="Q3UZV7"/>
    </source>
</evidence>
<evidence type="ECO:0000250" key="4">
    <source>
        <dbReference type="UniProtKB" id="Q6DDW2"/>
    </source>
</evidence>
<evidence type="ECO:0000255" key="5"/>
<evidence type="ECO:0000255" key="6">
    <source>
        <dbReference type="PROSITE-ProRule" id="PRU01262"/>
    </source>
</evidence>
<evidence type="ECO:0000256" key="7">
    <source>
        <dbReference type="SAM" id="MobiDB-lite"/>
    </source>
</evidence>
<evidence type="ECO:0000305" key="8"/>
<proteinExistence type="evidence at transcript level"/>
<sequence length="960" mass="105850">MLFLRPGPARGRGRGRPARAPHSGLSPPWSPAWICCWALAGCQAAWAGAGDLPSTSGRPLPPCLEKDYHFEYTECDSSGSRWRVAIPNSAVDCSGLPDPVRGKECTFSCASGEYLEMKNQVCSKCGEGTYSLGSGIKFDEWDELPAGFSNVATFMDTVVGPSDSRPEGCNNSSWVPRGNYIESNRDDCTVSLIYAVHLKKSGYVFFEYQYVDNNIFFEFFIQNDQCQEMDTTADKWVKLTDNGEWGSHSVMLKSGTNILYWRTTGILMGSKAVKPVLVKNITIEGVAYTSECFPCKPGTFSDKPGSFICQVCPRNTYSEKGAKECIRCDEDSQFSEEGSSECMERPPCTSKDYFQIHTPCDEEGKTQIMYKWIEPKICREDLTDAIRLPPSGEKKDCPPCNPGFYNNGSSSCHPCPPGTFSDGTKECRSCPAGTEPALGFEYKWWNVLPGNMKTSCFNVGNSKCDGMNGWEVAGDHIQSGAGGSDNDYLILNLHIPGFKPPTSMTGAMGSELGRITFVFETLCSADCVLYFMVDINRKSTNVVESWGGTKEKQAYTHVIFKNATFTFTWAFQRTNQGQDATTLRKKPTSAWSVHLIPTCPYIRSMARRLVFHVGLGVEALSNLSSVGSLMNGPSFTSKGTKYFHFFNISLCGHEGKKLAVCTNNITDFTVKEMVAGSDDYTNLVGAFVCQSTIIPSESKGFRAALSSQSIILADTFLGVTVETTLQNINIKEDMFPVSPSQIPDVHFFYKSSTTTTSCVNGRSTAVKMRCNPAKPGAGAISVPSKCPAGTCDGCTFYFLWESVEACPLCTEHDFHEIEGACKRGFQETLYVWNEPKWCIKGISLPEKKLSTCETVDFWLKVGAGVGAFTAVLLVALTCYFWKKNQKLEYKYSKLVMTTNSKECELPAADSCAIMEGEDNEEEVVYSNKQSLLGKLKSLATKEKEDHFESVQLKSSRSPNI</sequence>
<keyword id="KW-1003">Cell membrane</keyword>
<keyword id="KW-1015">Disulfide bond</keyword>
<keyword id="KW-0325">Glycoprotein</keyword>
<keyword id="KW-0472">Membrane</keyword>
<keyword id="KW-0597">Phosphoprotein</keyword>
<keyword id="KW-1185">Reference proteome</keyword>
<keyword id="KW-0732">Signal</keyword>
<keyword id="KW-0812">Transmembrane</keyword>
<keyword id="KW-1133">Transmembrane helix</keyword>
<feature type="signal peptide" evidence="5">
    <location>
        <begin position="1"/>
        <end position="44"/>
    </location>
</feature>
<feature type="chain" id="PRO_0000333797" description="Endosome/lysosome-associated apoptosis and autophagy regulator family member 2">
    <location>
        <begin position="45"/>
        <end position="960"/>
    </location>
</feature>
<feature type="topological domain" description="Extracellular" evidence="5">
    <location>
        <begin position="45"/>
        <end position="860"/>
    </location>
</feature>
<feature type="transmembrane region" description="Helical" evidence="5">
    <location>
        <begin position="861"/>
        <end position="881"/>
    </location>
</feature>
<feature type="topological domain" description="Cytoplasmic" evidence="5">
    <location>
        <begin position="882"/>
        <end position="960"/>
    </location>
</feature>
<feature type="domain" description="MRH" evidence="6">
    <location>
        <begin position="597"/>
        <end position="808"/>
    </location>
</feature>
<feature type="region of interest" description="Disordered" evidence="7">
    <location>
        <begin position="1"/>
        <end position="26"/>
    </location>
</feature>
<feature type="modified residue" description="Phosphoserine" evidence="2">
    <location>
        <position position="949"/>
    </location>
</feature>
<feature type="glycosylation site" description="N-linked (GlcNAc...) asparagine" evidence="5">
    <location>
        <position position="171"/>
    </location>
</feature>
<feature type="glycosylation site" description="N-linked (GlcNAc...) asparagine" evidence="5">
    <location>
        <position position="407"/>
    </location>
</feature>
<feature type="glycosylation site" description="N-linked (GlcNAc...) asparagine" evidence="5">
    <location>
        <position position="622"/>
    </location>
</feature>
<feature type="disulfide bond" evidence="1">
    <location>
        <begin position="295"/>
        <end position="312"/>
    </location>
</feature>
<feature type="disulfide bond" evidence="1">
    <location>
        <begin position="325"/>
        <end position="348"/>
    </location>
</feature>
<feature type="disulfide bond" evidence="1">
    <location>
        <begin position="328"/>
        <end position="360"/>
    </location>
</feature>
<feature type="disulfide bond" evidence="6">
    <location>
        <begin position="599"/>
        <end position="651"/>
    </location>
</feature>
<feature type="disulfide bond" evidence="6">
    <location>
        <begin position="661"/>
        <end position="689"/>
    </location>
</feature>
<feature type="disulfide bond" evidence="6">
    <location>
        <begin position="758"/>
        <end position="794"/>
    </location>
</feature>
<feature type="disulfide bond" evidence="6">
    <location>
        <begin position="770"/>
        <end position="806"/>
    </location>
</feature>
<dbReference type="EMBL" id="BC151637">
    <property type="protein sequence ID" value="AAI51638.1"/>
    <property type="molecule type" value="mRNA"/>
</dbReference>
<dbReference type="RefSeq" id="NP_001039703.2">
    <property type="nucleotide sequence ID" value="NM_001046238.4"/>
</dbReference>
<dbReference type="FunCoup" id="A7E2Z9">
    <property type="interactions" value="1070"/>
</dbReference>
<dbReference type="STRING" id="9913.ENSBTAP00000005255"/>
<dbReference type="GlyCosmos" id="A7E2Z9">
    <property type="glycosylation" value="3 sites, No reported glycans"/>
</dbReference>
<dbReference type="GlyGen" id="A7E2Z9">
    <property type="glycosylation" value="3 sites"/>
</dbReference>
<dbReference type="PaxDb" id="9913-ENSBTAP00000005255"/>
<dbReference type="GeneID" id="518313"/>
<dbReference type="KEGG" id="bta:518313"/>
<dbReference type="CTD" id="222223"/>
<dbReference type="eggNOG" id="KOG1217">
    <property type="taxonomic scope" value="Eukaryota"/>
</dbReference>
<dbReference type="HOGENOM" id="CLU_005066_0_0_1"/>
<dbReference type="InParanoid" id="A7E2Z9"/>
<dbReference type="OrthoDB" id="439917at2759"/>
<dbReference type="TreeFam" id="TF315906"/>
<dbReference type="Proteomes" id="UP000009136">
    <property type="component" value="Unplaced"/>
</dbReference>
<dbReference type="GO" id="GO:0016020">
    <property type="term" value="C:membrane"/>
    <property type="evidence" value="ECO:0000318"/>
    <property type="project" value="GO_Central"/>
</dbReference>
<dbReference type="GO" id="GO:0005886">
    <property type="term" value="C:plasma membrane"/>
    <property type="evidence" value="ECO:0000250"/>
    <property type="project" value="UniProtKB"/>
</dbReference>
<dbReference type="GO" id="GO:0070700">
    <property type="term" value="F:BMP receptor binding"/>
    <property type="evidence" value="ECO:0000250"/>
    <property type="project" value="UniProtKB"/>
</dbReference>
<dbReference type="GO" id="GO:0051961">
    <property type="term" value="P:negative regulation of nervous system development"/>
    <property type="evidence" value="ECO:0000250"/>
    <property type="project" value="UniProtKB"/>
</dbReference>
<dbReference type="GO" id="GO:0030513">
    <property type="term" value="P:positive regulation of BMP signaling pathway"/>
    <property type="evidence" value="ECO:0000250"/>
    <property type="project" value="UniProtKB"/>
</dbReference>
<dbReference type="GO" id="GO:0045684">
    <property type="term" value="P:positive regulation of epidermis development"/>
    <property type="evidence" value="ECO:0000250"/>
    <property type="project" value="UniProtKB"/>
</dbReference>
<dbReference type="Gene3D" id="2.10.50.10">
    <property type="entry name" value="Tumor Necrosis Factor Receptor, subunit A, domain 2"/>
    <property type="match status" value="2"/>
</dbReference>
<dbReference type="InterPro" id="IPR056609">
    <property type="entry name" value="Elapor1-like_3rd"/>
</dbReference>
<dbReference type="InterPro" id="IPR039181">
    <property type="entry name" value="Elapor1/2"/>
</dbReference>
<dbReference type="InterPro" id="IPR056606">
    <property type="entry name" value="Elapor1/2_C"/>
</dbReference>
<dbReference type="InterPro" id="IPR056608">
    <property type="entry name" value="Elapor1/2_GBD"/>
</dbReference>
<dbReference type="InterPro" id="IPR056607">
    <property type="entry name" value="Elapor1/2_MRH"/>
</dbReference>
<dbReference type="InterPro" id="IPR056610">
    <property type="entry name" value="Elapor1/2_TNFR-like"/>
</dbReference>
<dbReference type="InterPro" id="IPR009011">
    <property type="entry name" value="Man6P_isomerase_rcpt-bd_dom_sf"/>
</dbReference>
<dbReference type="InterPro" id="IPR044865">
    <property type="entry name" value="MRH_dom"/>
</dbReference>
<dbReference type="PANTHER" id="PTHR22727:SF3">
    <property type="entry name" value="ENDOSOME_LYSOSOME-ASSOCIATED APOPTOSIS AND AUTOPHAGY REGULATOR FAMILY MEMBER 2"/>
    <property type="match status" value="1"/>
</dbReference>
<dbReference type="PANTHER" id="PTHR22727">
    <property type="entry name" value="PROTEIN CBG13728"/>
    <property type="match status" value="1"/>
</dbReference>
<dbReference type="Pfam" id="PF23089">
    <property type="entry name" value="ELAPOR1_C"/>
    <property type="match status" value="1"/>
</dbReference>
<dbReference type="Pfam" id="PF23031">
    <property type="entry name" value="GBD_ELAPOR1"/>
    <property type="match status" value="1"/>
</dbReference>
<dbReference type="Pfam" id="PF23032">
    <property type="entry name" value="GBD_ELAPOR1-like_3rd"/>
    <property type="match status" value="1"/>
</dbReference>
<dbReference type="Pfam" id="PF23087">
    <property type="entry name" value="MRH_ELAPOR1_9th"/>
    <property type="match status" value="1"/>
</dbReference>
<dbReference type="Pfam" id="PF23091">
    <property type="entry name" value="TNFR_ELAPOR1_6th"/>
    <property type="match status" value="1"/>
</dbReference>
<dbReference type="SMART" id="SM01411">
    <property type="entry name" value="Ephrin_rec_like"/>
    <property type="match status" value="3"/>
</dbReference>
<dbReference type="SUPFAM" id="SSF50911">
    <property type="entry name" value="Mannose 6-phosphate receptor domain"/>
    <property type="match status" value="1"/>
</dbReference>
<dbReference type="PROSITE" id="PS51914">
    <property type="entry name" value="MRH"/>
    <property type="match status" value="1"/>
</dbReference>
<comment type="function">
    <text evidence="3">Functions as a regulator of the BMP signaling pathway and may be involved in epidermal differentiation.</text>
</comment>
<comment type="subcellular location">
    <subcellularLocation>
        <location evidence="4">Cell membrane</location>
        <topology evidence="5">Single-pass type I membrane protein</topology>
    </subcellularLocation>
</comment>
<comment type="similarity">
    <text evidence="8">Belongs to the ELAPOR family.</text>
</comment>